<name>AMP1_MIRJA</name>
<feature type="signal peptide" evidence="2">
    <location>
        <begin position="1" status="less than"/>
        <end position="24"/>
    </location>
</feature>
<feature type="chain" id="PRO_0000001310" description="Antimicrobial peptide 1">
    <location>
        <begin position="25"/>
        <end position="61"/>
    </location>
</feature>
<feature type="modified residue" description="Pyrrolidone carboxylic acid" evidence="2">
    <location>
        <position position="25"/>
    </location>
</feature>
<feature type="disulfide bond" evidence="1">
    <location>
        <begin position="26"/>
        <end position="43"/>
    </location>
</feature>
<feature type="disulfide bond" evidence="1">
    <location>
        <begin position="33"/>
        <end position="47"/>
    </location>
</feature>
<feature type="disulfide bond" evidence="1">
    <location>
        <begin position="42"/>
        <end position="58"/>
    </location>
</feature>
<feature type="non-terminal residue">
    <location>
        <position position="1"/>
    </location>
</feature>
<dbReference type="EMBL" id="U15538">
    <property type="protein sequence ID" value="AAA80484.1"/>
    <property type="molecule type" value="mRNA"/>
</dbReference>
<dbReference type="PIR" id="S57815">
    <property type="entry name" value="S57815"/>
</dbReference>
<dbReference type="SMR" id="P25403"/>
<dbReference type="GO" id="GO:0005576">
    <property type="term" value="C:extracellular region"/>
    <property type="evidence" value="ECO:0007669"/>
    <property type="project" value="UniProtKB-SubCell"/>
</dbReference>
<dbReference type="GO" id="GO:0042742">
    <property type="term" value="P:defense response to bacterium"/>
    <property type="evidence" value="ECO:0007669"/>
    <property type="project" value="UniProtKB-KW"/>
</dbReference>
<dbReference type="GO" id="GO:0050832">
    <property type="term" value="P:defense response to fungus"/>
    <property type="evidence" value="ECO:0007669"/>
    <property type="project" value="UniProtKB-KW"/>
</dbReference>
<dbReference type="GO" id="GO:0031640">
    <property type="term" value="P:killing of cells of another organism"/>
    <property type="evidence" value="ECO:0007669"/>
    <property type="project" value="UniProtKB-KW"/>
</dbReference>
<dbReference type="InterPro" id="IPR013006">
    <property type="entry name" value="Antimicrobial_C6_CS"/>
</dbReference>
<dbReference type="InterPro" id="IPR009101">
    <property type="entry name" value="Gurmarin/antifun_pep"/>
</dbReference>
<dbReference type="InterPro" id="IPR024206">
    <property type="entry name" value="Gurmarin/antimicrobial_peptd"/>
</dbReference>
<dbReference type="Pfam" id="PF11410">
    <property type="entry name" value="Antifungal_pept"/>
    <property type="match status" value="1"/>
</dbReference>
<dbReference type="SUPFAM" id="SSF57048">
    <property type="entry name" value="Gurmarin-like"/>
    <property type="match status" value="1"/>
</dbReference>
<dbReference type="PROSITE" id="PS60011">
    <property type="entry name" value="PLANT_C6_AMP"/>
    <property type="match status" value="1"/>
</dbReference>
<gene>
    <name type="primary">AMP1</name>
</gene>
<proteinExistence type="evidence at protein level"/>
<organism>
    <name type="scientific">Mirabilis jalapa</name>
    <name type="common">Garden four-o'clock</name>
    <dbReference type="NCBI Taxonomy" id="3538"/>
    <lineage>
        <taxon>Eukaryota</taxon>
        <taxon>Viridiplantae</taxon>
        <taxon>Streptophyta</taxon>
        <taxon>Embryophyta</taxon>
        <taxon>Tracheophyta</taxon>
        <taxon>Spermatophyta</taxon>
        <taxon>Magnoliopsida</taxon>
        <taxon>eudicotyledons</taxon>
        <taxon>Gunneridae</taxon>
        <taxon>Pentapetalae</taxon>
        <taxon>Caryophyllales</taxon>
        <taxon>Nyctaginaceae</taxon>
        <taxon>Mirabilis</taxon>
    </lineage>
</organism>
<comment type="function">
    <text>Possesses antifungal activity and is also active on two tested Gram-positive bacteria but is non-toxic for Gram-negative bacteria and cultured human cells.</text>
</comment>
<comment type="subunit">
    <text>Homodimer.</text>
</comment>
<comment type="subcellular location">
    <subcellularLocation>
        <location>Secreted</location>
    </subcellularLocation>
</comment>
<comment type="tissue specificity">
    <text>Found only in seeds.</text>
</comment>
<comment type="domain">
    <text evidence="1">The presence of a 'disulfide through disulfide knot' structurally defines this protein as a knottin.</text>
</comment>
<comment type="PTM">
    <text>Three disulfide bonds are present.</text>
</comment>
<comment type="similarity">
    <text evidence="3">Belongs to the AMP family.</text>
</comment>
<accession>P25403</accession>
<keyword id="KW-0044">Antibiotic</keyword>
<keyword id="KW-0929">Antimicrobial</keyword>
<keyword id="KW-0903">Direct protein sequencing</keyword>
<keyword id="KW-1015">Disulfide bond</keyword>
<keyword id="KW-0295">Fungicide</keyword>
<keyword id="KW-0960">Knottin</keyword>
<keyword id="KW-0611">Plant defense</keyword>
<keyword id="KW-0873">Pyrrolidone carboxylic acid</keyword>
<keyword id="KW-0964">Secreted</keyword>
<keyword id="KW-0732">Signal</keyword>
<reference key="1">
    <citation type="journal article" date="1995" name="Plant Mol. Biol.">
        <title>Cloning and characterization of two cDNA clones encoding seed-specific antimicrobial peptides from Mirabilis jalapa L.</title>
        <authorList>
            <person name="de Bolle M.F."/>
            <person name="Eggermont K."/>
            <person name="Duncan R.E."/>
            <person name="Osborn R.W."/>
            <person name="Terras F.R.G."/>
            <person name="Broekaert W.F."/>
        </authorList>
    </citation>
    <scope>NUCLEOTIDE SEQUENCE [MRNA]</scope>
    <source>
        <tissue>Seed</tissue>
    </source>
</reference>
<reference key="2">
    <citation type="journal article" date="1992" name="J. Biol. Chem.">
        <title>Isolation and characterization of a novel class of plant antimicrobial peptides from Mirabilis jalapa L. seeds.</title>
        <authorList>
            <person name="Cammue B.P.A."/>
            <person name="de Bolle M.F.C."/>
            <person name="Terras F.R.G."/>
            <person name="Proost P."/>
            <person name="van Damme J."/>
            <person name="Rees S.B."/>
            <person name="Vanderleyden J."/>
            <person name="Broekaert W.F."/>
        </authorList>
    </citation>
    <scope>PROTEIN SEQUENCE OF 25-61</scope>
    <scope>PYROGLUTAMATE FORMATION AT GLN-25</scope>
    <source>
        <tissue>Seed</tissue>
    </source>
</reference>
<protein>
    <recommendedName>
        <fullName>Antimicrobial peptide 1</fullName>
    </recommendedName>
    <alternativeName>
        <fullName>MJ-AMP1</fullName>
        <shortName>AMP1</shortName>
    </alternativeName>
</protein>
<sequence>LPVAFLKFAIVLILFIAMSAMIEAQCIGNGGRCNENVGPPYCCSGFCLRQPGQGYGYCKNR</sequence>
<evidence type="ECO:0000250" key="1"/>
<evidence type="ECO:0000269" key="2">
    <source>
    </source>
</evidence>
<evidence type="ECO:0000305" key="3"/>